<evidence type="ECO:0000250" key="1">
    <source>
        <dbReference type="UniProtKB" id="P53867"/>
    </source>
</evidence>
<evidence type="ECO:0000250" key="2">
    <source>
        <dbReference type="UniProtKB" id="Q9Y4P1"/>
    </source>
</evidence>
<evidence type="ECO:0000256" key="3">
    <source>
        <dbReference type="SAM" id="MobiDB-lite"/>
    </source>
</evidence>
<evidence type="ECO:0000305" key="4"/>
<protein>
    <recommendedName>
        <fullName>Probable cysteine protease ATG4</fullName>
        <ecNumber>3.4.22.-</ecNumber>
    </recommendedName>
    <alternativeName>
        <fullName>Autophagy-related protein 4</fullName>
    </alternativeName>
</protein>
<comment type="function">
    <text evidence="1">Cysteine protease that plays a key role in cytoplasm to vacuole transport (Cvt) and autophagy by mediating both proteolytic activation and delipidation of ATG8. Required for selective autophagic degradation of the nucleus (nucleophagy) as well as for mitophagy which contributes to regulate mitochondrial quantity and quality by eliminating the mitochondria to a basal level to fulfill cellular energy requirements and preventing excess ROS production. The protease activity is required for proteolytic activation of ATG8: cleaves the C-terminal amino acid of ATG8 to reveal a C-terminal glycine. ATG8 ubiquitin-like activity requires the exposure of the glycine at the C-terminus for its conjugation to phosphatidylethanolamine (PE) and its insertion to membranes, which is necessary for autophagy. The ATG8-PE conjugate mediates tethering between adjacent membranes and stimulates membrane hemifusion, leading to expansion of the autophagosomal membrane during autophagy. In addition to the protease activity, also catalyzes deconjugation of PE-conjugated forms of ATG8 during macroautophagy: ATG8 delipidation is required to release the protein from membranes, which facilitates multiple events during macroautophagy, and especially for efficient autophagosome biogenesis, the assembly of ATG9-containing tubulovesicular clusters into phagophores/autophagosomes, and for the disassembly of PAS-associated ATG components. ATG8 delipidation by ATG4 also recycles ATG8-PE generated on inappropriate membranes to maintain a reservoir of unlipidated ATG8 that is required for autophagosome formation at the PAS.</text>
</comment>
<comment type="catalytic activity">
    <reaction evidence="1">
        <text>[protein]-C-terminal L-amino acid-glycyl-phosphatidylethanolamide + H2O = [protein]-C-terminal L-amino acid-glycine + a 1,2-diacyl-sn-glycero-3-phosphoethanolamine</text>
        <dbReference type="Rhea" id="RHEA:67548"/>
        <dbReference type="Rhea" id="RHEA-COMP:17323"/>
        <dbReference type="Rhea" id="RHEA-COMP:17324"/>
        <dbReference type="ChEBI" id="CHEBI:15377"/>
        <dbReference type="ChEBI" id="CHEBI:64612"/>
        <dbReference type="ChEBI" id="CHEBI:172940"/>
        <dbReference type="ChEBI" id="CHEBI:172941"/>
    </reaction>
    <physiologicalReaction direction="left-to-right" evidence="1">
        <dbReference type="Rhea" id="RHEA:67549"/>
    </physiologicalReaction>
</comment>
<comment type="subcellular location">
    <subcellularLocation>
        <location evidence="1">Cytoplasm</location>
    </subcellularLocation>
    <subcellularLocation>
        <location evidence="1">Nucleus</location>
    </subcellularLocation>
    <subcellularLocation>
        <location evidence="1">Preautophagosomal structure</location>
    </subcellularLocation>
</comment>
<comment type="similarity">
    <text evidence="4">Belongs to the peptidase C54 family.</text>
</comment>
<proteinExistence type="inferred from homology"/>
<keyword id="KW-0072">Autophagy</keyword>
<keyword id="KW-0963">Cytoplasm</keyword>
<keyword id="KW-0378">Hydrolase</keyword>
<keyword id="KW-0539">Nucleus</keyword>
<keyword id="KW-0645">Protease</keyword>
<keyword id="KW-0653">Protein transport</keyword>
<keyword id="KW-1185">Reference proteome</keyword>
<keyword id="KW-0788">Thiol protease</keyword>
<keyword id="KW-0813">Transport</keyword>
<feature type="chain" id="PRO_0000317837" description="Probable cysteine protease ATG4">
    <location>
        <begin position="1"/>
        <end position="432"/>
    </location>
</feature>
<feature type="region of interest" description="Disordered" evidence="3">
    <location>
        <begin position="74"/>
        <end position="97"/>
    </location>
</feature>
<feature type="active site" description="Nucleophile" evidence="2">
    <location>
        <position position="160"/>
    </location>
</feature>
<feature type="active site" evidence="2">
    <location>
        <position position="332"/>
    </location>
</feature>
<feature type="active site" evidence="2">
    <location>
        <position position="334"/>
    </location>
</feature>
<sequence length="432" mass="49088">MNTVDIGQKYKRIVEYLWDPEPKNDDDIIEPVWCLGKEYKTSIPRDSEGAEAPESCNMPGMPFLSPMNQMSLSSRDTQAALSKPATPPHQLGIQRSKSREWPTSFLDDFESKFWFTYRSNFPAIPKSRDPDTPLALTLSVRLRSQFLDTHGFTADTGWGCMIRSGQSLLANALSILNLGRDWRRGSKIKEECELLSLFADNPQAPFSIHRFVDYGASACGKHPGEWFGPSATARCIEALSNECKHTDLNVYVMSDGSDVHEDQFRQIAGPDGIRPTLILLGVRLGIESVTPVYWEALRAIIRYPQSVGIAGGRPSSSLYFIGVQGPYFFYLDPHHTRPAVSWNPDSTLSPENLDTYHTRRLRRLHIREMDPSMLIGFLIKDDDDWKDWKRRLRSVTGNPIIHIFDLERPNFGRHLEREEAVDEVEALDDDSN</sequence>
<gene>
    <name type="primary">ATG4</name>
    <name type="ORF">CIMG_02134</name>
</gene>
<organism>
    <name type="scientific">Coccidioides immitis (strain RS)</name>
    <name type="common">Valley fever fungus</name>
    <dbReference type="NCBI Taxonomy" id="246410"/>
    <lineage>
        <taxon>Eukaryota</taxon>
        <taxon>Fungi</taxon>
        <taxon>Dikarya</taxon>
        <taxon>Ascomycota</taxon>
        <taxon>Pezizomycotina</taxon>
        <taxon>Eurotiomycetes</taxon>
        <taxon>Eurotiomycetidae</taxon>
        <taxon>Onygenales</taxon>
        <taxon>Onygenaceae</taxon>
        <taxon>Coccidioides</taxon>
    </lineage>
</organism>
<accession>Q1E5M9</accession>
<accession>A0A0D6K9Q7</accession>
<accession>J3KL21</accession>
<name>ATG4_COCIM</name>
<dbReference type="EC" id="3.4.22.-"/>
<dbReference type="EMBL" id="GG704911">
    <property type="protein sequence ID" value="EAS36780.1"/>
    <property type="molecule type" value="Genomic_DNA"/>
</dbReference>
<dbReference type="RefSeq" id="XP_001248363.1">
    <property type="nucleotide sequence ID" value="XM_001248362.2"/>
</dbReference>
<dbReference type="SMR" id="Q1E5M9"/>
<dbReference type="FunCoup" id="Q1E5M9">
    <property type="interactions" value="292"/>
</dbReference>
<dbReference type="STRING" id="246410.Q1E5M9"/>
<dbReference type="MEROPS" id="C54.001"/>
<dbReference type="MEROPS" id="I51.001"/>
<dbReference type="GeneID" id="4568199"/>
<dbReference type="KEGG" id="cim:CIMG_02134"/>
<dbReference type="VEuPathDB" id="FungiDB:CIMG_02134"/>
<dbReference type="InParanoid" id="Q1E5M9"/>
<dbReference type="OMA" id="TGFGCMI"/>
<dbReference type="OrthoDB" id="2960936at2759"/>
<dbReference type="Proteomes" id="UP000001261">
    <property type="component" value="Unassembled WGS sequence"/>
</dbReference>
<dbReference type="GO" id="GO:0005634">
    <property type="term" value="C:nucleus"/>
    <property type="evidence" value="ECO:0007669"/>
    <property type="project" value="UniProtKB-SubCell"/>
</dbReference>
<dbReference type="GO" id="GO:0000407">
    <property type="term" value="C:phagophore assembly site"/>
    <property type="evidence" value="ECO:0007669"/>
    <property type="project" value="UniProtKB-SubCell"/>
</dbReference>
<dbReference type="GO" id="GO:0004197">
    <property type="term" value="F:cysteine-type endopeptidase activity"/>
    <property type="evidence" value="ECO:0007669"/>
    <property type="project" value="TreeGrafter"/>
</dbReference>
<dbReference type="GO" id="GO:0019786">
    <property type="term" value="F:protein-phosphatidylethanolamide deconjugating activity"/>
    <property type="evidence" value="ECO:0007669"/>
    <property type="project" value="InterPro"/>
</dbReference>
<dbReference type="GO" id="GO:0035973">
    <property type="term" value="P:aggrephagy"/>
    <property type="evidence" value="ECO:0007669"/>
    <property type="project" value="TreeGrafter"/>
</dbReference>
<dbReference type="GO" id="GO:0000045">
    <property type="term" value="P:autophagosome assembly"/>
    <property type="evidence" value="ECO:0007669"/>
    <property type="project" value="TreeGrafter"/>
</dbReference>
<dbReference type="GO" id="GO:0000423">
    <property type="term" value="P:mitophagy"/>
    <property type="evidence" value="ECO:0007669"/>
    <property type="project" value="TreeGrafter"/>
</dbReference>
<dbReference type="GO" id="GO:0034727">
    <property type="term" value="P:piecemeal microautophagy of the nucleus"/>
    <property type="evidence" value="ECO:0007669"/>
    <property type="project" value="TreeGrafter"/>
</dbReference>
<dbReference type="GO" id="GO:0016485">
    <property type="term" value="P:protein processing"/>
    <property type="evidence" value="ECO:0007669"/>
    <property type="project" value="TreeGrafter"/>
</dbReference>
<dbReference type="GO" id="GO:0015031">
    <property type="term" value="P:protein transport"/>
    <property type="evidence" value="ECO:0007669"/>
    <property type="project" value="UniProtKB-KW"/>
</dbReference>
<dbReference type="InterPro" id="IPR038765">
    <property type="entry name" value="Papain-like_cys_pep_sf"/>
</dbReference>
<dbReference type="InterPro" id="IPR005078">
    <property type="entry name" value="Peptidase_C54"/>
</dbReference>
<dbReference type="InterPro" id="IPR046792">
    <property type="entry name" value="Peptidase_C54_cat"/>
</dbReference>
<dbReference type="PANTHER" id="PTHR22624:SF49">
    <property type="entry name" value="CYSTEINE PROTEASE"/>
    <property type="match status" value="1"/>
</dbReference>
<dbReference type="PANTHER" id="PTHR22624">
    <property type="entry name" value="CYSTEINE PROTEASE ATG4"/>
    <property type="match status" value="1"/>
</dbReference>
<dbReference type="Pfam" id="PF03416">
    <property type="entry name" value="Peptidase_C54"/>
    <property type="match status" value="1"/>
</dbReference>
<dbReference type="SUPFAM" id="SSF54001">
    <property type="entry name" value="Cysteine proteinases"/>
    <property type="match status" value="1"/>
</dbReference>
<reference key="1">
    <citation type="journal article" date="2009" name="Genome Res.">
        <title>Comparative genomic analyses of the human fungal pathogens Coccidioides and their relatives.</title>
        <authorList>
            <person name="Sharpton T.J."/>
            <person name="Stajich J.E."/>
            <person name="Rounsley S.D."/>
            <person name="Gardner M.J."/>
            <person name="Wortman J.R."/>
            <person name="Jordar V.S."/>
            <person name="Maiti R."/>
            <person name="Kodira C.D."/>
            <person name="Neafsey D.E."/>
            <person name="Zeng Q."/>
            <person name="Hung C.-Y."/>
            <person name="McMahan C."/>
            <person name="Muszewska A."/>
            <person name="Grynberg M."/>
            <person name="Mandel M.A."/>
            <person name="Kellner E.M."/>
            <person name="Barker B.M."/>
            <person name="Galgiani J.N."/>
            <person name="Orbach M.J."/>
            <person name="Kirkland T.N."/>
            <person name="Cole G.T."/>
            <person name="Henn M.R."/>
            <person name="Birren B.W."/>
            <person name="Taylor J.W."/>
        </authorList>
    </citation>
    <scope>NUCLEOTIDE SEQUENCE [LARGE SCALE GENOMIC DNA]</scope>
    <source>
        <strain>RS</strain>
    </source>
</reference>
<reference key="2">
    <citation type="journal article" date="2010" name="Genome Res.">
        <title>Population genomic sequencing of Coccidioides fungi reveals recent hybridization and transposon control.</title>
        <authorList>
            <person name="Neafsey D.E."/>
            <person name="Barker B.M."/>
            <person name="Sharpton T.J."/>
            <person name="Stajich J.E."/>
            <person name="Park D.J."/>
            <person name="Whiston E."/>
            <person name="Hung C.-Y."/>
            <person name="McMahan C."/>
            <person name="White J."/>
            <person name="Sykes S."/>
            <person name="Heiman D."/>
            <person name="Young S."/>
            <person name="Zeng Q."/>
            <person name="Abouelleil A."/>
            <person name="Aftuck L."/>
            <person name="Bessette D."/>
            <person name="Brown A."/>
            <person name="FitzGerald M."/>
            <person name="Lui A."/>
            <person name="Macdonald J.P."/>
            <person name="Priest M."/>
            <person name="Orbach M.J."/>
            <person name="Galgiani J.N."/>
            <person name="Kirkland T.N."/>
            <person name="Cole G.T."/>
            <person name="Birren B.W."/>
            <person name="Henn M.R."/>
            <person name="Taylor J.W."/>
            <person name="Rounsley S.D."/>
        </authorList>
    </citation>
    <scope>GENOME REANNOTATION</scope>
    <source>
        <strain>RS</strain>
    </source>
</reference>